<evidence type="ECO:0000256" key="1">
    <source>
        <dbReference type="SAM" id="MobiDB-lite"/>
    </source>
</evidence>
<evidence type="ECO:0000305" key="2"/>
<gene>
    <name type="ordered locus">ECU06_1610</name>
</gene>
<name>Y6G1_ENCCU</name>
<accession>Q8SV64</accession>
<reference key="1">
    <citation type="journal article" date="2001" name="Nature">
        <title>Genome sequence and gene compaction of the eukaryote parasite Encephalitozoon cuniculi.</title>
        <authorList>
            <person name="Katinka M.D."/>
            <person name="Duprat S."/>
            <person name="Cornillot E."/>
            <person name="Metenier G."/>
            <person name="Thomarat F."/>
            <person name="Prensier G."/>
            <person name="Barbe V."/>
            <person name="Peyretaillade E."/>
            <person name="Brottier P."/>
            <person name="Wincker P."/>
            <person name="Delbac F."/>
            <person name="El Alaoui H."/>
            <person name="Peyret P."/>
            <person name="Saurin W."/>
            <person name="Gouy M."/>
            <person name="Weissenbach J."/>
            <person name="Vivares C.P."/>
        </authorList>
    </citation>
    <scope>NUCLEOTIDE SEQUENCE [LARGE SCALE GENOMIC DNA]</scope>
    <source>
        <strain>GB-M1</strain>
    </source>
</reference>
<sequence>MRMWLGYTLALLAGLHGSNVEGTNEVEKTRKRFEKAFSCKLSDEEVEIIRKSLVEVSGLETRILLPLIFHDRKLVASPVAKYRDINEREREYVEKVVRLLPYLAWRSVALVCAPGNWTLFLMYDVFKTTSFKDFDPVVLYRESKGRSRMRLMDLVVEIFKRNNCMVSRFGQGLAREAEVRIQGISSSLSAMERKREEEMLRKIKEHGERLCTKKNQEQIIEAQKIMCDACEYIWKREENRKSFVMGAHLKHLYLRMIDPSNDVEGPLLYYIDHEKMINTYEKYKSISIVAELVKKVVIEYEDINDESISSAVHEVKERESEEKRREEESLRNAEELLRMEEREKGEGKGPNGKGKKKRGKKGAGKAKEESKEEDRGEEEEESVEAEVPVEEMAAEGARPKKKRSKERSKGEDSCYRVHKRVLRWMKSVERIKYELDNGKEEKWKGKSMEEIEGQKVLHDIIEVLKLLRSRECDKFFVRTGKYMKGGSERWKMVALGILDEGGEKKVGNVEVGLFKGKREESVVYHLMFKPTSSEKTGKGSSPSFGKGDDVDEIEEDGSSDMSGFQYPPGVRSEVVKDKGEFRIVWRNPKDTSSVLRSLAVLQIPEIQ</sequence>
<comment type="similarity">
    <text evidence="2">Belongs to the UPF0329 family.</text>
</comment>
<feature type="chain" id="PRO_0000223165" description="UPF0329 protein ECU06_1610">
    <location>
        <begin position="1"/>
        <end position="607"/>
    </location>
</feature>
<feature type="region of interest" description="Disordered" evidence="1">
    <location>
        <begin position="312"/>
        <end position="410"/>
    </location>
</feature>
<feature type="region of interest" description="Disordered" evidence="1">
    <location>
        <begin position="531"/>
        <end position="570"/>
    </location>
</feature>
<feature type="compositionally biased region" description="Basic and acidic residues" evidence="1">
    <location>
        <begin position="313"/>
        <end position="347"/>
    </location>
</feature>
<feature type="compositionally biased region" description="Basic residues" evidence="1">
    <location>
        <begin position="353"/>
        <end position="364"/>
    </location>
</feature>
<feature type="compositionally biased region" description="Basic and acidic residues" evidence="1">
    <location>
        <begin position="365"/>
        <end position="374"/>
    </location>
</feature>
<feature type="compositionally biased region" description="Acidic residues" evidence="1">
    <location>
        <begin position="375"/>
        <end position="393"/>
    </location>
</feature>
<feature type="compositionally biased region" description="Polar residues" evidence="1">
    <location>
        <begin position="531"/>
        <end position="543"/>
    </location>
</feature>
<feature type="compositionally biased region" description="Acidic residues" evidence="1">
    <location>
        <begin position="549"/>
        <end position="558"/>
    </location>
</feature>
<organism>
    <name type="scientific">Encephalitozoon cuniculi (strain GB-M1)</name>
    <name type="common">Microsporidian parasite</name>
    <dbReference type="NCBI Taxonomy" id="284813"/>
    <lineage>
        <taxon>Eukaryota</taxon>
        <taxon>Fungi</taxon>
        <taxon>Fungi incertae sedis</taxon>
        <taxon>Microsporidia</taxon>
        <taxon>Unikaryonidae</taxon>
        <taxon>Encephalitozoon</taxon>
    </lineage>
</organism>
<dbReference type="EMBL" id="AL590446">
    <property type="protein sequence ID" value="CAD25522.1"/>
    <property type="molecule type" value="Genomic_DNA"/>
</dbReference>
<dbReference type="RefSeq" id="NP_585918.1">
    <property type="nucleotide sequence ID" value="NM_001041540.1"/>
</dbReference>
<dbReference type="SMR" id="Q8SV64"/>
<dbReference type="STRING" id="284813.Q8SV64"/>
<dbReference type="GeneID" id="859346"/>
<dbReference type="KEGG" id="ecu:ECU06_1610"/>
<dbReference type="VEuPathDB" id="MicrosporidiaDB:ECU06_1610"/>
<dbReference type="HOGENOM" id="CLU_035434_0_0_1"/>
<dbReference type="InParanoid" id="Q8SV64"/>
<dbReference type="Proteomes" id="UP000000819">
    <property type="component" value="Chromosome VI"/>
</dbReference>
<dbReference type="InterPro" id="IPR022115">
    <property type="entry name" value="DUF3654"/>
</dbReference>
<dbReference type="InterPro" id="IPR011667">
    <property type="entry name" value="UPF0329"/>
</dbReference>
<dbReference type="Pfam" id="PF07753">
    <property type="entry name" value="DUF1609"/>
    <property type="match status" value="1"/>
</dbReference>
<dbReference type="Pfam" id="PF12376">
    <property type="entry name" value="DUF3654"/>
    <property type="match status" value="1"/>
</dbReference>
<proteinExistence type="inferred from homology"/>
<protein>
    <recommendedName>
        <fullName>UPF0329 protein ECU06_1610</fullName>
    </recommendedName>
</protein>
<keyword id="KW-1185">Reference proteome</keyword>